<organism>
    <name type="scientific">Rhodopseudomonas palustris (strain BisA53)</name>
    <dbReference type="NCBI Taxonomy" id="316055"/>
    <lineage>
        <taxon>Bacteria</taxon>
        <taxon>Pseudomonadati</taxon>
        <taxon>Pseudomonadota</taxon>
        <taxon>Alphaproteobacteria</taxon>
        <taxon>Hyphomicrobiales</taxon>
        <taxon>Nitrobacteraceae</taxon>
        <taxon>Rhodopseudomonas</taxon>
    </lineage>
</organism>
<name>YBEY_RHOP5</name>
<reference key="1">
    <citation type="submission" date="2006-09" db="EMBL/GenBank/DDBJ databases">
        <title>Complete sequence of Rhodopseudomonas palustris BisA53.</title>
        <authorList>
            <consortium name="US DOE Joint Genome Institute"/>
            <person name="Copeland A."/>
            <person name="Lucas S."/>
            <person name="Lapidus A."/>
            <person name="Barry K."/>
            <person name="Detter J.C."/>
            <person name="Glavina del Rio T."/>
            <person name="Hammon N."/>
            <person name="Israni S."/>
            <person name="Dalin E."/>
            <person name="Tice H."/>
            <person name="Pitluck S."/>
            <person name="Chain P."/>
            <person name="Malfatti S."/>
            <person name="Shin M."/>
            <person name="Vergez L."/>
            <person name="Schmutz J."/>
            <person name="Larimer F."/>
            <person name="Land M."/>
            <person name="Hauser L."/>
            <person name="Pelletier D.A."/>
            <person name="Kyrpides N."/>
            <person name="Kim E."/>
            <person name="Harwood C.S."/>
            <person name="Oda Y."/>
            <person name="Richardson P."/>
        </authorList>
    </citation>
    <scope>NUCLEOTIDE SEQUENCE [LARGE SCALE GENOMIC DNA]</scope>
    <source>
        <strain>BisA53</strain>
    </source>
</reference>
<dbReference type="EC" id="3.1.-.-" evidence="1"/>
<dbReference type="EMBL" id="CP000463">
    <property type="protein sequence ID" value="ABJ04164.1"/>
    <property type="molecule type" value="Genomic_DNA"/>
</dbReference>
<dbReference type="SMR" id="Q07V70"/>
<dbReference type="STRING" id="316055.RPE_0204"/>
<dbReference type="KEGG" id="rpe:RPE_0204"/>
<dbReference type="eggNOG" id="COG0319">
    <property type="taxonomic scope" value="Bacteria"/>
</dbReference>
<dbReference type="HOGENOM" id="CLU_106710_0_0_5"/>
<dbReference type="OrthoDB" id="9807740at2"/>
<dbReference type="GO" id="GO:0005737">
    <property type="term" value="C:cytoplasm"/>
    <property type="evidence" value="ECO:0007669"/>
    <property type="project" value="UniProtKB-SubCell"/>
</dbReference>
<dbReference type="GO" id="GO:0004222">
    <property type="term" value="F:metalloendopeptidase activity"/>
    <property type="evidence" value="ECO:0007669"/>
    <property type="project" value="InterPro"/>
</dbReference>
<dbReference type="GO" id="GO:0004521">
    <property type="term" value="F:RNA endonuclease activity"/>
    <property type="evidence" value="ECO:0007669"/>
    <property type="project" value="UniProtKB-UniRule"/>
</dbReference>
<dbReference type="GO" id="GO:0008270">
    <property type="term" value="F:zinc ion binding"/>
    <property type="evidence" value="ECO:0007669"/>
    <property type="project" value="UniProtKB-UniRule"/>
</dbReference>
<dbReference type="GO" id="GO:0006364">
    <property type="term" value="P:rRNA processing"/>
    <property type="evidence" value="ECO:0007669"/>
    <property type="project" value="UniProtKB-UniRule"/>
</dbReference>
<dbReference type="Gene3D" id="3.40.390.30">
    <property type="entry name" value="Metalloproteases ('zincins'), catalytic domain"/>
    <property type="match status" value="1"/>
</dbReference>
<dbReference type="HAMAP" id="MF_00009">
    <property type="entry name" value="Endoribonucl_YbeY"/>
    <property type="match status" value="1"/>
</dbReference>
<dbReference type="InterPro" id="IPR023091">
    <property type="entry name" value="MetalPrtase_cat_dom_sf_prd"/>
</dbReference>
<dbReference type="InterPro" id="IPR002036">
    <property type="entry name" value="YbeY"/>
</dbReference>
<dbReference type="InterPro" id="IPR020549">
    <property type="entry name" value="YbeY_CS"/>
</dbReference>
<dbReference type="NCBIfam" id="TIGR00043">
    <property type="entry name" value="rRNA maturation RNase YbeY"/>
    <property type="match status" value="1"/>
</dbReference>
<dbReference type="PANTHER" id="PTHR46986">
    <property type="entry name" value="ENDORIBONUCLEASE YBEY, CHLOROPLASTIC"/>
    <property type="match status" value="1"/>
</dbReference>
<dbReference type="PANTHER" id="PTHR46986:SF1">
    <property type="entry name" value="ENDORIBONUCLEASE YBEY, CHLOROPLASTIC"/>
    <property type="match status" value="1"/>
</dbReference>
<dbReference type="Pfam" id="PF02130">
    <property type="entry name" value="YbeY"/>
    <property type="match status" value="1"/>
</dbReference>
<dbReference type="SUPFAM" id="SSF55486">
    <property type="entry name" value="Metalloproteases ('zincins'), catalytic domain"/>
    <property type="match status" value="1"/>
</dbReference>
<dbReference type="PROSITE" id="PS01306">
    <property type="entry name" value="UPF0054"/>
    <property type="match status" value="1"/>
</dbReference>
<feature type="chain" id="PRO_0000284292" description="Endoribonuclease YbeY">
    <location>
        <begin position="1"/>
        <end position="172"/>
    </location>
</feature>
<feature type="binding site" evidence="1">
    <location>
        <position position="124"/>
    </location>
    <ligand>
        <name>Zn(2+)</name>
        <dbReference type="ChEBI" id="CHEBI:29105"/>
        <note>catalytic</note>
    </ligand>
</feature>
<feature type="binding site" evidence="1">
    <location>
        <position position="128"/>
    </location>
    <ligand>
        <name>Zn(2+)</name>
        <dbReference type="ChEBI" id="CHEBI:29105"/>
        <note>catalytic</note>
    </ligand>
</feature>
<feature type="binding site" evidence="1">
    <location>
        <position position="134"/>
    </location>
    <ligand>
        <name>Zn(2+)</name>
        <dbReference type="ChEBI" id="CHEBI:29105"/>
        <note>catalytic</note>
    </ligand>
</feature>
<keyword id="KW-0963">Cytoplasm</keyword>
<keyword id="KW-0255">Endonuclease</keyword>
<keyword id="KW-0378">Hydrolase</keyword>
<keyword id="KW-0479">Metal-binding</keyword>
<keyword id="KW-0540">Nuclease</keyword>
<keyword id="KW-0690">Ribosome biogenesis</keyword>
<keyword id="KW-0698">rRNA processing</keyword>
<keyword id="KW-0862">Zinc</keyword>
<comment type="function">
    <text evidence="1">Single strand-specific metallo-endoribonuclease involved in late-stage 70S ribosome quality control and in maturation of the 3' terminus of the 16S rRNA.</text>
</comment>
<comment type="cofactor">
    <cofactor evidence="1">
        <name>Zn(2+)</name>
        <dbReference type="ChEBI" id="CHEBI:29105"/>
    </cofactor>
    <text evidence="1">Binds 1 zinc ion.</text>
</comment>
<comment type="subcellular location">
    <subcellularLocation>
        <location evidence="1">Cytoplasm</location>
    </subcellularLocation>
</comment>
<comment type="similarity">
    <text evidence="1">Belongs to the endoribonuclease YbeY family.</text>
</comment>
<sequence>MSFVPPATEVLIVADCWQAESEAEAVVLRAIEAAAAMVDAETADAELAVMLSDDAGVRTLNANWRGLDKPTNVLSFPALQPSATMPDDAPRMLGDIAIAYETTRREADDEGKPFDHHLSHLAVHGFLHLVGYDHETESEAEAMEQLERRILAQLGVPDPYADQDRADQDRVN</sequence>
<proteinExistence type="inferred from homology"/>
<protein>
    <recommendedName>
        <fullName evidence="1">Endoribonuclease YbeY</fullName>
        <ecNumber evidence="1">3.1.-.-</ecNumber>
    </recommendedName>
</protein>
<gene>
    <name evidence="1" type="primary">ybeY</name>
    <name type="ordered locus">RPE_0204</name>
</gene>
<evidence type="ECO:0000255" key="1">
    <source>
        <dbReference type="HAMAP-Rule" id="MF_00009"/>
    </source>
</evidence>
<accession>Q07V70</accession>